<name>BTRW_BORBR</name>
<evidence type="ECO:0000250" key="1"/>
<evidence type="ECO:0000269" key="2">
    <source>
    </source>
</evidence>
<evidence type="ECO:0000305" key="3"/>
<feature type="chain" id="PRO_0000349294" description="Serine/threonine-protein kinase BtrW">
    <location>
        <begin position="1"/>
        <end position="142"/>
    </location>
</feature>
<feature type="mutagenesis site" description="Loss of kinase activity toward BtrV, enhanced stability of BtrV-BtrW complexes." evidence="2">
    <original>N</original>
    <variation>A</variation>
    <location>
        <position position="51"/>
    </location>
</feature>
<feature type="mutagenesis site" description="Reduced kinase activity toward BtrV, lack of stable interaction with BtrV, does not affect multimerization of BtrW; when associated with A-84." evidence="2">
    <original>D</original>
    <variation>A</variation>
    <location>
        <position position="82"/>
    </location>
</feature>
<feature type="mutagenesis site" description="Reduced kinase activity toward BtrV, lack of stable interaction with BtrV, does not affect multimerization of BtrW; when associated with A-82." evidence="2">
    <original>G</original>
    <variation>A</variation>
    <location>
        <position position="84"/>
    </location>
</feature>
<comment type="function">
    <text evidence="1 2">Possible negative regulator of sigma-B activity (By similarity). Phosphorylates and inactivates its specific antagonist protein, BtrV. Upon phosphorylation of BtrV, BtrW is released and binds to an unknown partner(s) that might be sigma-B, thereby blocking its ability to form a complex with its partner (possibly an RNA polymerase holoenzyme (E-sigma-B)). Involved in type III secretion system (T3SS). Phosphorylates BtrV.</text>
</comment>
<comment type="catalytic activity">
    <reaction>
        <text>L-seryl-[protein] + ATP = O-phospho-L-seryl-[protein] + ADP + H(+)</text>
        <dbReference type="Rhea" id="RHEA:17989"/>
        <dbReference type="Rhea" id="RHEA-COMP:9863"/>
        <dbReference type="Rhea" id="RHEA-COMP:11604"/>
        <dbReference type="ChEBI" id="CHEBI:15378"/>
        <dbReference type="ChEBI" id="CHEBI:29999"/>
        <dbReference type="ChEBI" id="CHEBI:30616"/>
        <dbReference type="ChEBI" id="CHEBI:83421"/>
        <dbReference type="ChEBI" id="CHEBI:456216"/>
        <dbReference type="EC" id="2.7.11.1"/>
    </reaction>
</comment>
<comment type="catalytic activity">
    <reaction>
        <text>L-threonyl-[protein] + ATP = O-phospho-L-threonyl-[protein] + ADP + H(+)</text>
        <dbReference type="Rhea" id="RHEA:46608"/>
        <dbReference type="Rhea" id="RHEA-COMP:11060"/>
        <dbReference type="Rhea" id="RHEA-COMP:11605"/>
        <dbReference type="ChEBI" id="CHEBI:15378"/>
        <dbReference type="ChEBI" id="CHEBI:30013"/>
        <dbReference type="ChEBI" id="CHEBI:30616"/>
        <dbReference type="ChEBI" id="CHEBI:61977"/>
        <dbReference type="ChEBI" id="CHEBI:456216"/>
        <dbReference type="EC" id="2.7.11.1"/>
    </reaction>
</comment>
<comment type="subunit">
    <text evidence="2">Probably able to multimerize; interacts with BtrV.</text>
</comment>
<comment type="miscellaneous">
    <text>Type III secreted proteins Bsp22 and BopD accumulate intracellularly instead of being secreted in cells expressing the mutagenized BtrV.</text>
</comment>
<comment type="similarity">
    <text evidence="3">Belongs to the anti-sigma-factor family.</text>
</comment>
<accession>Q7WLV0</accession>
<dbReference type="EC" id="2.7.11.1"/>
<dbReference type="EMBL" id="BX640442">
    <property type="protein sequence ID" value="CAE32142.1"/>
    <property type="molecule type" value="Genomic_DNA"/>
</dbReference>
<dbReference type="RefSeq" id="WP_003809933.1">
    <property type="nucleotide sequence ID" value="NC_002927.3"/>
</dbReference>
<dbReference type="SMR" id="Q7WLV0"/>
<dbReference type="KEGG" id="bbr:BB1645"/>
<dbReference type="eggNOG" id="COG2172">
    <property type="taxonomic scope" value="Bacteria"/>
</dbReference>
<dbReference type="HOGENOM" id="CLU_090336_24_2_4"/>
<dbReference type="Proteomes" id="UP000001027">
    <property type="component" value="Chromosome"/>
</dbReference>
<dbReference type="GO" id="GO:0005524">
    <property type="term" value="F:ATP binding"/>
    <property type="evidence" value="ECO:0007669"/>
    <property type="project" value="UniProtKB-KW"/>
</dbReference>
<dbReference type="GO" id="GO:0106310">
    <property type="term" value="F:protein serine kinase activity"/>
    <property type="evidence" value="ECO:0007669"/>
    <property type="project" value="RHEA"/>
</dbReference>
<dbReference type="GO" id="GO:0004674">
    <property type="term" value="F:protein serine/threonine kinase activity"/>
    <property type="evidence" value="ECO:0007669"/>
    <property type="project" value="UniProtKB-KW"/>
</dbReference>
<dbReference type="CDD" id="cd16936">
    <property type="entry name" value="HATPase_RsbW-like"/>
    <property type="match status" value="1"/>
</dbReference>
<dbReference type="Gene3D" id="3.30.565.10">
    <property type="entry name" value="Histidine kinase-like ATPase, C-terminal domain"/>
    <property type="match status" value="1"/>
</dbReference>
<dbReference type="InterPro" id="IPR036890">
    <property type="entry name" value="HATPase_C_sf"/>
</dbReference>
<dbReference type="Pfam" id="PF13581">
    <property type="entry name" value="HATPase_c_2"/>
    <property type="match status" value="1"/>
</dbReference>
<dbReference type="SUPFAM" id="SSF55874">
    <property type="entry name" value="ATPase domain of HSP90 chaperone/DNA topoisomerase II/histidine kinase"/>
    <property type="match status" value="1"/>
</dbReference>
<organism>
    <name type="scientific">Bordetella bronchiseptica (strain ATCC BAA-588 / NCTC 13252 / RB50)</name>
    <name type="common">Alcaligenes bronchisepticus</name>
    <dbReference type="NCBI Taxonomy" id="257310"/>
    <lineage>
        <taxon>Bacteria</taxon>
        <taxon>Pseudomonadati</taxon>
        <taxon>Pseudomonadota</taxon>
        <taxon>Betaproteobacteria</taxon>
        <taxon>Burkholderiales</taxon>
        <taxon>Alcaligenaceae</taxon>
        <taxon>Bordetella</taxon>
    </lineage>
</organism>
<protein>
    <recommendedName>
        <fullName>Serine/threonine-protein kinase BtrW</fullName>
        <ecNumber>2.7.11.1</ecNumber>
    </recommendedName>
    <alternativeName>
        <fullName>Anti-sigma factor</fullName>
    </alternativeName>
    <alternativeName>
        <fullName>Sigma negative effector BtrW</fullName>
    </alternativeName>
</protein>
<keyword id="KW-0067">ATP-binding</keyword>
<keyword id="KW-0418">Kinase</keyword>
<keyword id="KW-0547">Nucleotide-binding</keyword>
<keyword id="KW-0723">Serine/threonine-protein kinase</keyword>
<keyword id="KW-0808">Transferase</keyword>
<gene>
    <name type="primary">btrW</name>
    <name type="ordered locus">BB1645</name>
</gene>
<sequence>MSSKTDTLELSVTATTATDALYWLEHIALRDRWSARLRFTLTLCADEALNNIVSHAFTPGHPAAIHLTLRQTRREVSLHIADNGAAYDPTQALSPPLARSLDDAQPGGHGLRLMRHFMHALSYQRRDGWNHLTLTSHSAPES</sequence>
<reference key="1">
    <citation type="journal article" date="2003" name="Nat. Genet.">
        <title>Comparative analysis of the genome sequences of Bordetella pertussis, Bordetella parapertussis and Bordetella bronchiseptica.</title>
        <authorList>
            <person name="Parkhill J."/>
            <person name="Sebaihia M."/>
            <person name="Preston A."/>
            <person name="Murphy L.D."/>
            <person name="Thomson N.R."/>
            <person name="Harris D.E."/>
            <person name="Holden M.T.G."/>
            <person name="Churcher C.M."/>
            <person name="Bentley S.D."/>
            <person name="Mungall K.L."/>
            <person name="Cerdeno-Tarraga A.-M."/>
            <person name="Temple L."/>
            <person name="James K.D."/>
            <person name="Harris B."/>
            <person name="Quail M.A."/>
            <person name="Achtman M."/>
            <person name="Atkin R."/>
            <person name="Baker S."/>
            <person name="Basham D."/>
            <person name="Bason N."/>
            <person name="Cherevach I."/>
            <person name="Chillingworth T."/>
            <person name="Collins M."/>
            <person name="Cronin A."/>
            <person name="Davis P."/>
            <person name="Doggett J."/>
            <person name="Feltwell T."/>
            <person name="Goble A."/>
            <person name="Hamlin N."/>
            <person name="Hauser H."/>
            <person name="Holroyd S."/>
            <person name="Jagels K."/>
            <person name="Leather S."/>
            <person name="Moule S."/>
            <person name="Norberczak H."/>
            <person name="O'Neil S."/>
            <person name="Ormond D."/>
            <person name="Price C."/>
            <person name="Rabbinowitsch E."/>
            <person name="Rutter S."/>
            <person name="Sanders M."/>
            <person name="Saunders D."/>
            <person name="Seeger K."/>
            <person name="Sharp S."/>
            <person name="Simmonds M."/>
            <person name="Skelton J."/>
            <person name="Squares R."/>
            <person name="Squares S."/>
            <person name="Stevens K."/>
            <person name="Unwin L."/>
            <person name="Whitehead S."/>
            <person name="Barrell B.G."/>
            <person name="Maskell D.J."/>
        </authorList>
    </citation>
    <scope>NUCLEOTIDE SEQUENCE [LARGE SCALE GENOMIC DNA]</scope>
    <source>
        <strain>ATCC BAA-588 / NCTC 13252 / RB50</strain>
    </source>
</reference>
<reference key="2">
    <citation type="journal article" date="2005" name="J. Bacteriol.">
        <title>Interactions between partner switcher orthologs BtrW and BtrV regulate type III secretion in Bordetella.</title>
        <authorList>
            <person name="Kozak N.A."/>
            <person name="Mattoo S."/>
            <person name="Foreman-Wykert A.K."/>
            <person name="Whitelegge J.P."/>
            <person name="Miller J.F."/>
        </authorList>
    </citation>
    <scope>FUNCTION</scope>
    <scope>INTERACTION</scope>
    <scope>MUTAGENESIS OF ASN-51; ASP-82 AND GLY-84</scope>
    <source>
        <strain>ATCC BAA-588 / NCTC 13252 / RB50</strain>
    </source>
</reference>
<proteinExistence type="evidence at protein level"/>